<name>RPO3_HALS3</name>
<accession>B0R4Y2</accession>
<reference key="1">
    <citation type="journal article" date="2008" name="Genomics">
        <title>Evolution in the laboratory: the genome of Halobacterium salinarum strain R1 compared to that of strain NRC-1.</title>
        <authorList>
            <person name="Pfeiffer F."/>
            <person name="Schuster S.C."/>
            <person name="Broicher A."/>
            <person name="Falb M."/>
            <person name="Palm P."/>
            <person name="Rodewald K."/>
            <person name="Ruepp A."/>
            <person name="Soppa J."/>
            <person name="Tittor J."/>
            <person name="Oesterhelt D."/>
        </authorList>
    </citation>
    <scope>NUCLEOTIDE SEQUENCE [LARGE SCALE GENOMIC DNA]</scope>
    <source>
        <strain>ATCC 29341 / DSM 671 / R1</strain>
    </source>
</reference>
<sequence>MSSQDFDVEFVDRDDREARFVVRNITPAFANGIRRAILVDVPTLSIDTVRFVENSSVMFDEQLGLRLGLVPLTTPEDYAAGEAVTLALDVEGPGTAYSGDLVSNDPEVEAADENIPIIELKDDQRLELEADAVMGHGRDHAKHQGGVAVGYRHLQRVHVVGDSPEYADDDPQMLRGVIEEDDELVPTDDFDNDLTTRYPGKEVEIEDVDGAFVFHVESDGSMPVEELVLRAVDTLVDRADELEQAVQL</sequence>
<keyword id="KW-0963">Cytoplasm</keyword>
<keyword id="KW-0240">DNA-directed RNA polymerase</keyword>
<keyword id="KW-0548">Nucleotidyltransferase</keyword>
<keyword id="KW-0804">Transcription</keyword>
<keyword id="KW-0808">Transferase</keyword>
<dbReference type="EC" id="2.7.7.6" evidence="1"/>
<dbReference type="EMBL" id="AM774415">
    <property type="protein sequence ID" value="CAP13797.1"/>
    <property type="molecule type" value="Genomic_DNA"/>
</dbReference>
<dbReference type="RefSeq" id="WP_010902815.1">
    <property type="nucleotide sequence ID" value="NC_010364.1"/>
</dbReference>
<dbReference type="SMR" id="B0R4Y2"/>
<dbReference type="EnsemblBacteria" id="CAP13797">
    <property type="protein sequence ID" value="CAP13797"/>
    <property type="gene ID" value="OE_2631F"/>
</dbReference>
<dbReference type="KEGG" id="hsl:OE_2631F"/>
<dbReference type="HOGENOM" id="CLU_038421_3_1_2"/>
<dbReference type="PhylomeDB" id="B0R4Y2"/>
<dbReference type="Proteomes" id="UP000001321">
    <property type="component" value="Chromosome"/>
</dbReference>
<dbReference type="GO" id="GO:0005737">
    <property type="term" value="C:cytoplasm"/>
    <property type="evidence" value="ECO:0007669"/>
    <property type="project" value="UniProtKB-SubCell"/>
</dbReference>
<dbReference type="GO" id="GO:0000428">
    <property type="term" value="C:DNA-directed RNA polymerase complex"/>
    <property type="evidence" value="ECO:0007669"/>
    <property type="project" value="UniProtKB-KW"/>
</dbReference>
<dbReference type="GO" id="GO:0003677">
    <property type="term" value="F:DNA binding"/>
    <property type="evidence" value="ECO:0007669"/>
    <property type="project" value="UniProtKB-UniRule"/>
</dbReference>
<dbReference type="GO" id="GO:0003899">
    <property type="term" value="F:DNA-directed RNA polymerase activity"/>
    <property type="evidence" value="ECO:0007669"/>
    <property type="project" value="UniProtKB-UniRule"/>
</dbReference>
<dbReference type="GO" id="GO:0046983">
    <property type="term" value="F:protein dimerization activity"/>
    <property type="evidence" value="ECO:0007669"/>
    <property type="project" value="InterPro"/>
</dbReference>
<dbReference type="GO" id="GO:0006351">
    <property type="term" value="P:DNA-templated transcription"/>
    <property type="evidence" value="ECO:0007669"/>
    <property type="project" value="UniProtKB-UniRule"/>
</dbReference>
<dbReference type="Gene3D" id="3.30.70.3110">
    <property type="match status" value="1"/>
</dbReference>
<dbReference type="Gene3D" id="2.170.120.12">
    <property type="entry name" value="DNA-directed RNA polymerase, insert domain"/>
    <property type="match status" value="1"/>
</dbReference>
<dbReference type="Gene3D" id="3.30.1360.10">
    <property type="entry name" value="RNA polymerase, RBP11-like subunit"/>
    <property type="match status" value="1"/>
</dbReference>
<dbReference type="HAMAP" id="MF_00320">
    <property type="entry name" value="RNApol_arch_Rpo3"/>
    <property type="match status" value="1"/>
</dbReference>
<dbReference type="InterPro" id="IPR001514">
    <property type="entry name" value="DNA-dir_RNA_pol_30-40kDasu_CS"/>
</dbReference>
<dbReference type="InterPro" id="IPR011262">
    <property type="entry name" value="DNA-dir_RNA_pol_insert"/>
</dbReference>
<dbReference type="InterPro" id="IPR011263">
    <property type="entry name" value="DNA-dir_RNA_pol_RpoA/D/Rpb3"/>
</dbReference>
<dbReference type="InterPro" id="IPR036603">
    <property type="entry name" value="RBP11-like"/>
</dbReference>
<dbReference type="InterPro" id="IPR022842">
    <property type="entry name" value="RNAP_Rpo3/Rpb3/RPAC1"/>
</dbReference>
<dbReference type="InterPro" id="IPR036643">
    <property type="entry name" value="RNApol_insert_sf"/>
</dbReference>
<dbReference type="InterPro" id="IPR050518">
    <property type="entry name" value="Rpo3/RPB3_RNA_Pol_subunit"/>
</dbReference>
<dbReference type="NCBIfam" id="NF001988">
    <property type="entry name" value="PRK00783.1"/>
    <property type="match status" value="1"/>
</dbReference>
<dbReference type="PANTHER" id="PTHR11800">
    <property type="entry name" value="DNA-DIRECTED RNA POLYMERASE"/>
    <property type="match status" value="1"/>
</dbReference>
<dbReference type="PANTHER" id="PTHR11800:SF2">
    <property type="entry name" value="DNA-DIRECTED RNA POLYMERASE II SUBUNIT RPB3"/>
    <property type="match status" value="1"/>
</dbReference>
<dbReference type="Pfam" id="PF01000">
    <property type="entry name" value="RNA_pol_A_bac"/>
    <property type="match status" value="1"/>
</dbReference>
<dbReference type="Pfam" id="PF01193">
    <property type="entry name" value="RNA_pol_L"/>
    <property type="match status" value="1"/>
</dbReference>
<dbReference type="SMART" id="SM00662">
    <property type="entry name" value="RPOLD"/>
    <property type="match status" value="1"/>
</dbReference>
<dbReference type="SUPFAM" id="SSF56553">
    <property type="entry name" value="Insert subdomain of RNA polymerase alpha subunit"/>
    <property type="match status" value="1"/>
</dbReference>
<dbReference type="SUPFAM" id="SSF55257">
    <property type="entry name" value="RBP11-like subunits of RNA polymerase"/>
    <property type="match status" value="1"/>
</dbReference>
<dbReference type="PROSITE" id="PS00446">
    <property type="entry name" value="RNA_POL_D_30KD"/>
    <property type="match status" value="1"/>
</dbReference>
<protein>
    <recommendedName>
        <fullName evidence="1">DNA-directed RNA polymerase subunit Rpo3</fullName>
        <ecNumber evidence="1">2.7.7.6</ecNumber>
    </recommendedName>
    <alternativeName>
        <fullName evidence="1">DNA-directed RNA polymerase subunit D</fullName>
    </alternativeName>
</protein>
<feature type="chain" id="PRO_1000115947" description="DNA-directed RNA polymerase subunit Rpo3">
    <location>
        <begin position="1"/>
        <end position="248"/>
    </location>
</feature>
<evidence type="ECO:0000255" key="1">
    <source>
        <dbReference type="HAMAP-Rule" id="MF_00320"/>
    </source>
</evidence>
<gene>
    <name evidence="1" type="primary">rpo3</name>
    <name evidence="1" type="synonym">rpoD</name>
    <name type="ordered locus">OE_2631F</name>
</gene>
<organism>
    <name type="scientific">Halobacterium salinarum (strain ATCC 29341 / DSM 671 / R1)</name>
    <dbReference type="NCBI Taxonomy" id="478009"/>
    <lineage>
        <taxon>Archaea</taxon>
        <taxon>Methanobacteriati</taxon>
        <taxon>Methanobacteriota</taxon>
        <taxon>Stenosarchaea group</taxon>
        <taxon>Halobacteria</taxon>
        <taxon>Halobacteriales</taxon>
        <taxon>Halobacteriaceae</taxon>
        <taxon>Halobacterium</taxon>
        <taxon>Halobacterium salinarum NRC-34001</taxon>
    </lineage>
</organism>
<proteinExistence type="inferred from homology"/>
<comment type="function">
    <text evidence="1">DNA-dependent RNA polymerase (RNAP) catalyzes the transcription of DNA into RNA using the four ribonucleoside triphosphates as substrates.</text>
</comment>
<comment type="catalytic activity">
    <reaction evidence="1">
        <text>RNA(n) + a ribonucleoside 5'-triphosphate = RNA(n+1) + diphosphate</text>
        <dbReference type="Rhea" id="RHEA:21248"/>
        <dbReference type="Rhea" id="RHEA-COMP:14527"/>
        <dbReference type="Rhea" id="RHEA-COMP:17342"/>
        <dbReference type="ChEBI" id="CHEBI:33019"/>
        <dbReference type="ChEBI" id="CHEBI:61557"/>
        <dbReference type="ChEBI" id="CHEBI:140395"/>
        <dbReference type="EC" id="2.7.7.6"/>
    </reaction>
</comment>
<comment type="subunit">
    <text evidence="1">Part of the RNA polymerase complex.</text>
</comment>
<comment type="subcellular location">
    <subcellularLocation>
        <location evidence="1">Cytoplasm</location>
    </subcellularLocation>
</comment>
<comment type="similarity">
    <text evidence="1">Belongs to the archaeal Rpo3/eukaryotic RPB3 RNA polymerase subunit family.</text>
</comment>